<protein>
    <recommendedName>
        <fullName evidence="11">Netrin receptor UNC5B-b</fullName>
    </recommendedName>
    <alternativeName>
        <fullName>Protein unc-5 homolog-b</fullName>
    </alternativeName>
    <alternativeName>
        <fullName evidence="13">Unc-5-like protein B</fullName>
    </alternativeName>
</protein>
<dbReference type="EMBL" id="FJ824811">
    <property type="protein sequence ID" value="ACR78433.1"/>
    <property type="molecule type" value="mRNA"/>
</dbReference>
<dbReference type="RefSeq" id="NP_001155366.1">
    <property type="nucleotide sequence ID" value="NM_001161894.1"/>
</dbReference>
<dbReference type="SMR" id="C5IAW9"/>
<dbReference type="GlyCosmos" id="C5IAW9">
    <property type="glycosylation" value="2 sites, No reported glycans"/>
</dbReference>
<dbReference type="GeneID" id="100302095"/>
<dbReference type="KEGG" id="xla:100302095"/>
<dbReference type="AGR" id="Xenbase:XB-GENE-17333473"/>
<dbReference type="CTD" id="100302095"/>
<dbReference type="Xenbase" id="XB-GENE-17333473">
    <property type="gene designation" value="unc5b.S"/>
</dbReference>
<dbReference type="OrthoDB" id="5973910at2759"/>
<dbReference type="Proteomes" id="UP000186698">
    <property type="component" value="Chromosome 7S"/>
</dbReference>
<dbReference type="Bgee" id="100302095">
    <property type="expression patterns" value="Expressed in egg cell and 14 other cell types or tissues"/>
</dbReference>
<dbReference type="GO" id="GO:0005886">
    <property type="term" value="C:plasma membrane"/>
    <property type="evidence" value="ECO:0007669"/>
    <property type="project" value="UniProtKB-SubCell"/>
</dbReference>
<dbReference type="GO" id="GO:0005042">
    <property type="term" value="F:netrin receptor activity"/>
    <property type="evidence" value="ECO:0000318"/>
    <property type="project" value="GO_Central"/>
</dbReference>
<dbReference type="GO" id="GO:0033564">
    <property type="term" value="P:anterior/posterior axon guidance"/>
    <property type="evidence" value="ECO:0000318"/>
    <property type="project" value="GO_Central"/>
</dbReference>
<dbReference type="CDD" id="cd08802">
    <property type="entry name" value="Death_UNC5B"/>
    <property type="match status" value="1"/>
</dbReference>
<dbReference type="FunFam" id="1.10.533.10:FF:000001">
    <property type="entry name" value="Unc-5 netrin receptor B"/>
    <property type="match status" value="1"/>
</dbReference>
<dbReference type="FunFam" id="2.20.100.10:FF:000002">
    <property type="entry name" value="Unc-5 netrin receptor C"/>
    <property type="match status" value="1"/>
</dbReference>
<dbReference type="FunFam" id="2.20.100.10:FF:000008">
    <property type="entry name" value="Unc-5 netrin receptor C"/>
    <property type="match status" value="1"/>
</dbReference>
<dbReference type="FunFam" id="2.60.220.30:FF:000003">
    <property type="entry name" value="Unc-5 netrin receptor C"/>
    <property type="match status" value="1"/>
</dbReference>
<dbReference type="FunFam" id="2.60.40.10:FF:000037">
    <property type="entry name" value="Unc-5 netrin receptor C"/>
    <property type="match status" value="1"/>
</dbReference>
<dbReference type="FunFam" id="2.60.40.10:FF:000039">
    <property type="entry name" value="Unc-5 netrin receptor C"/>
    <property type="match status" value="1"/>
</dbReference>
<dbReference type="Gene3D" id="2.60.220.30">
    <property type="match status" value="1"/>
</dbReference>
<dbReference type="Gene3D" id="1.10.533.10">
    <property type="entry name" value="Death Domain, Fas"/>
    <property type="match status" value="1"/>
</dbReference>
<dbReference type="Gene3D" id="2.60.40.10">
    <property type="entry name" value="Immunoglobulins"/>
    <property type="match status" value="2"/>
</dbReference>
<dbReference type="Gene3D" id="2.20.100.10">
    <property type="entry name" value="Thrombospondin type-1 (TSP1) repeat"/>
    <property type="match status" value="2"/>
</dbReference>
<dbReference type="InterPro" id="IPR011029">
    <property type="entry name" value="DEATH-like_dom_sf"/>
</dbReference>
<dbReference type="InterPro" id="IPR000488">
    <property type="entry name" value="Death_dom"/>
</dbReference>
<dbReference type="InterPro" id="IPR042156">
    <property type="entry name" value="Death_UNC5B"/>
</dbReference>
<dbReference type="InterPro" id="IPR007110">
    <property type="entry name" value="Ig-like_dom"/>
</dbReference>
<dbReference type="InterPro" id="IPR036179">
    <property type="entry name" value="Ig-like_dom_sf"/>
</dbReference>
<dbReference type="InterPro" id="IPR013783">
    <property type="entry name" value="Ig-like_fold"/>
</dbReference>
<dbReference type="InterPro" id="IPR013098">
    <property type="entry name" value="Ig_I-set"/>
</dbReference>
<dbReference type="InterPro" id="IPR003599">
    <property type="entry name" value="Ig_sub"/>
</dbReference>
<dbReference type="InterPro" id="IPR003598">
    <property type="entry name" value="Ig_sub2"/>
</dbReference>
<dbReference type="InterPro" id="IPR000884">
    <property type="entry name" value="TSP1_rpt"/>
</dbReference>
<dbReference type="InterPro" id="IPR036383">
    <property type="entry name" value="TSP1_rpt_sf"/>
</dbReference>
<dbReference type="InterPro" id="IPR037936">
    <property type="entry name" value="UNC5"/>
</dbReference>
<dbReference type="InterPro" id="IPR033772">
    <property type="entry name" value="UPA"/>
</dbReference>
<dbReference type="InterPro" id="IPR000906">
    <property type="entry name" value="ZU5_dom"/>
</dbReference>
<dbReference type="PANTHER" id="PTHR12582">
    <property type="entry name" value="NETRIN RECEPTOR UNC5"/>
    <property type="match status" value="1"/>
</dbReference>
<dbReference type="PANTHER" id="PTHR12582:SF6">
    <property type="entry name" value="NETRIN RECEPTOR UNC5B"/>
    <property type="match status" value="1"/>
</dbReference>
<dbReference type="Pfam" id="PF00531">
    <property type="entry name" value="Death"/>
    <property type="match status" value="1"/>
</dbReference>
<dbReference type="Pfam" id="PF07679">
    <property type="entry name" value="I-set"/>
    <property type="match status" value="1"/>
</dbReference>
<dbReference type="Pfam" id="PF00090">
    <property type="entry name" value="TSP_1"/>
    <property type="match status" value="2"/>
</dbReference>
<dbReference type="Pfam" id="PF17217">
    <property type="entry name" value="UPA"/>
    <property type="match status" value="1"/>
</dbReference>
<dbReference type="Pfam" id="PF00791">
    <property type="entry name" value="ZU5"/>
    <property type="match status" value="1"/>
</dbReference>
<dbReference type="PRINTS" id="PR01705">
    <property type="entry name" value="TSP1REPEAT"/>
</dbReference>
<dbReference type="SMART" id="SM00005">
    <property type="entry name" value="DEATH"/>
    <property type="match status" value="1"/>
</dbReference>
<dbReference type="SMART" id="SM00409">
    <property type="entry name" value="IG"/>
    <property type="match status" value="1"/>
</dbReference>
<dbReference type="SMART" id="SM00408">
    <property type="entry name" value="IGc2"/>
    <property type="match status" value="1"/>
</dbReference>
<dbReference type="SMART" id="SM00209">
    <property type="entry name" value="TSP1"/>
    <property type="match status" value="2"/>
</dbReference>
<dbReference type="SMART" id="SM00218">
    <property type="entry name" value="ZU5"/>
    <property type="match status" value="1"/>
</dbReference>
<dbReference type="SUPFAM" id="SSF47986">
    <property type="entry name" value="DEATH domain"/>
    <property type="match status" value="1"/>
</dbReference>
<dbReference type="SUPFAM" id="SSF48726">
    <property type="entry name" value="Immunoglobulin"/>
    <property type="match status" value="2"/>
</dbReference>
<dbReference type="SUPFAM" id="SSF82895">
    <property type="entry name" value="TSP-1 type 1 repeat"/>
    <property type="match status" value="2"/>
</dbReference>
<dbReference type="PROSITE" id="PS50835">
    <property type="entry name" value="IG_LIKE"/>
    <property type="match status" value="1"/>
</dbReference>
<dbReference type="PROSITE" id="PS50092">
    <property type="entry name" value="TSP1"/>
    <property type="match status" value="2"/>
</dbReference>
<dbReference type="PROSITE" id="PS51145">
    <property type="entry name" value="ZU5"/>
    <property type="match status" value="1"/>
</dbReference>
<feature type="signal peptide" evidence="4">
    <location>
        <begin position="1"/>
        <end position="30"/>
    </location>
</feature>
<feature type="chain" id="PRO_0000434571" description="Netrin receptor UNC5B-b">
    <location>
        <begin position="31"/>
        <end position="942"/>
    </location>
</feature>
<feature type="topological domain" description="Extracellular" evidence="11">
    <location>
        <begin position="31"/>
        <end position="380"/>
    </location>
</feature>
<feature type="transmembrane region" description="Helical" evidence="4">
    <location>
        <begin position="381"/>
        <end position="401"/>
    </location>
</feature>
<feature type="topological domain" description="Cytoplasmic" evidence="11">
    <location>
        <begin position="402"/>
        <end position="942"/>
    </location>
</feature>
<feature type="domain" description="Ig-like" evidence="6">
    <location>
        <begin position="51"/>
        <end position="148"/>
    </location>
</feature>
<feature type="domain" description="Ig-like C2-type" evidence="6">
    <location>
        <begin position="150"/>
        <end position="245"/>
    </location>
</feature>
<feature type="domain" description="TSP type-1 1" evidence="7">
    <location>
        <begin position="249"/>
        <end position="303"/>
    </location>
</feature>
<feature type="domain" description="TSP type-1 2" evidence="7">
    <location>
        <begin position="305"/>
        <end position="357"/>
    </location>
</feature>
<feature type="domain" description="ZU5" evidence="8">
    <location>
        <begin position="541"/>
        <end position="684"/>
    </location>
</feature>
<feature type="domain" description="Death" evidence="5">
    <location>
        <begin position="863"/>
        <end position="940"/>
    </location>
</feature>
<feature type="region of interest" description="UPA domain" evidence="1">
    <location>
        <begin position="687"/>
        <end position="835"/>
    </location>
</feature>
<feature type="glycosylation site" description="N-linked (GlcNAc...) asparagine" evidence="9">
    <location>
        <position position="225"/>
    </location>
</feature>
<feature type="glycosylation site" description="N-linked (GlcNAc...) asparagine" evidence="9">
    <location>
        <position position="350"/>
    </location>
</feature>
<feature type="disulfide bond" evidence="3">
    <location>
        <begin position="72"/>
        <end position="133"/>
    </location>
</feature>
<feature type="disulfide bond" evidence="3">
    <location>
        <begin position="84"/>
        <end position="131"/>
    </location>
</feature>
<feature type="disulfide bond" evidence="3 6">
    <location>
        <begin position="177"/>
        <end position="228"/>
    </location>
</feature>
<feature type="disulfide bond" evidence="7">
    <location>
        <begin position="261"/>
        <end position="298"/>
    </location>
</feature>
<feature type="disulfide bond" evidence="7">
    <location>
        <begin position="265"/>
        <end position="302"/>
    </location>
</feature>
<feature type="disulfide bond" evidence="7">
    <location>
        <begin position="276"/>
        <end position="288"/>
    </location>
</feature>
<feature type="disulfide bond" evidence="3">
    <location>
        <begin position="317"/>
        <end position="351"/>
    </location>
</feature>
<feature type="disulfide bond" evidence="3">
    <location>
        <begin position="321"/>
        <end position="356"/>
    </location>
</feature>
<feature type="disulfide bond" evidence="3">
    <location>
        <begin position="329"/>
        <end position="341"/>
    </location>
</feature>
<evidence type="ECO:0000250" key="1"/>
<evidence type="ECO:0000250" key="2">
    <source>
        <dbReference type="UniProtKB" id="O08722"/>
    </source>
</evidence>
<evidence type="ECO:0000250" key="3">
    <source>
        <dbReference type="UniProtKB" id="Q6ZN44"/>
    </source>
</evidence>
<evidence type="ECO:0000255" key="4"/>
<evidence type="ECO:0000255" key="5">
    <source>
        <dbReference type="PROSITE-ProRule" id="PRU00064"/>
    </source>
</evidence>
<evidence type="ECO:0000255" key="6">
    <source>
        <dbReference type="PROSITE-ProRule" id="PRU00114"/>
    </source>
</evidence>
<evidence type="ECO:0000255" key="7">
    <source>
        <dbReference type="PROSITE-ProRule" id="PRU00210"/>
    </source>
</evidence>
<evidence type="ECO:0000255" key="8">
    <source>
        <dbReference type="PROSITE-ProRule" id="PRU00485"/>
    </source>
</evidence>
<evidence type="ECO:0000255" key="9">
    <source>
        <dbReference type="PROSITE-ProRule" id="PRU00498"/>
    </source>
</evidence>
<evidence type="ECO:0000269" key="10">
    <source>
    </source>
</evidence>
<evidence type="ECO:0000305" key="11"/>
<evidence type="ECO:0000305" key="12">
    <source>
    </source>
</evidence>
<evidence type="ECO:0000312" key="13">
    <source>
        <dbReference type="EMBL" id="ACR78433.1"/>
    </source>
</evidence>
<keyword id="KW-1003">Cell membrane</keyword>
<keyword id="KW-0217">Developmental protein</keyword>
<keyword id="KW-1015">Disulfide bond</keyword>
<keyword id="KW-0325">Glycoprotein</keyword>
<keyword id="KW-0393">Immunoglobulin domain</keyword>
<keyword id="KW-0472">Membrane</keyword>
<keyword id="KW-0675">Receptor</keyword>
<keyword id="KW-1185">Reference proteome</keyword>
<keyword id="KW-0677">Repeat</keyword>
<keyword id="KW-0732">Signal</keyword>
<keyword id="KW-0812">Transmembrane</keyword>
<keyword id="KW-1133">Transmembrane helix</keyword>
<comment type="function">
    <text evidence="2 10">Plays a role in cell-cell adhesion during embryonic development (PubMed:19492039). Receptor for netrin required for axon guidance. Mediates axon repulsion of neuronal growth cones in the developing nervous system upon ligand binding (By similarity).</text>
</comment>
<comment type="subunit">
    <text evidence="10">Interacts (via extracellular domain) with flrt3 (via extracellular domain). Interacts with rnd1.</text>
</comment>
<comment type="subcellular location">
    <subcellularLocation>
        <location evidence="12">Cell membrane</location>
        <topology evidence="11">Single-pass type I membrane protein</topology>
    </subcellularLocation>
</comment>
<comment type="similarity">
    <text evidence="11">Belongs to the unc-5 family.</text>
</comment>
<proteinExistence type="evidence at protein level"/>
<organism evidence="13">
    <name type="scientific">Xenopus laevis</name>
    <name type="common">African clawed frog</name>
    <dbReference type="NCBI Taxonomy" id="8355"/>
    <lineage>
        <taxon>Eukaryota</taxon>
        <taxon>Metazoa</taxon>
        <taxon>Chordata</taxon>
        <taxon>Craniata</taxon>
        <taxon>Vertebrata</taxon>
        <taxon>Euteleostomi</taxon>
        <taxon>Amphibia</taxon>
        <taxon>Batrachia</taxon>
        <taxon>Anura</taxon>
        <taxon>Pipoidea</taxon>
        <taxon>Pipidae</taxon>
        <taxon>Xenopodinae</taxon>
        <taxon>Xenopus</taxon>
        <taxon>Xenopus</taxon>
    </lineage>
</organism>
<name>UN5BB_XENLA</name>
<sequence>MYLSRIPGGAALAALLVALLLCCNFPPSIAGIEYSDVLPDSFPSAPAESLPHFLLEPEDAYIVKNKAVELVCKANPATQIYFKCNGEWVNQNDHITKERVDDVTGLVVREVQIEVSRQQVEELFGLEDFWCQCVAWSSAGTTKSKRSYVRIAYLRKNFDQEPLGKEVALEQEALLQCRPPEGVPPAEVEWLKNEEIIDSTKDTNFLITIDHNLIIKQARLSDTANYTCVAKNIVAKRRSTTATVIVFVNGGWSSWTEWSPCNNRCGHGWQKRTRTCTNPAPLNGGTMCEGQQYQKFACNTMCPVDGGWTEWSKWSACSTECTHWRSRECNAPTPKNGGKDCSGMLLDSKNCTDGLCMQNKRVLGETKSHLLESTGDVALYAGLVVAIFIIIILLMAVGIVVYRRNCREFDTDITDSSAALTGGFHPVNFKTSRHDNSHLIHPAMQPDLTANAGIYRGHMYALQDSADKIPMTNSPLLDPLPNLKIKVYNSSTVGSSPGIHDGNDLLGAKPTGTYPSDNIMNARNKNMSTQHLLTLPRDSSNSVTGTFGSLGGRLTFPNTGVSLLIPQGAIPQGKYYEMYLMINKRENTVLPSEGTQTILSPIITCGPTGLLLCKPVILTVPHCADITTSDWILQLKTQSHQGNWEEVVTLNEETLNTPCYCQLESHSCHILLDQLGTYAFVGESYSRSAIKRLQLAIFAPMLCTSLEYNLKVYCVEDTPDALKEVLELEKTLGGYLIEEPKPLMFKDSYHNLRLSIHDIPHSLWRSKLLAKYQEIPFYHVWSGSQRTLHCTFTLERYSLAATELTCKICVRQVEGEGQIFQLHTSLEENVKSFDPFCSHAENSVTTQLGPYAFKIPFLIRQKICNSLDAPNSRGNDWRLLAQKLCMDRYLNYFATKASPTGVILDLWEALHQDDGDLNTLASALEEMGKSEMMLVMATDGDC</sequence>
<accession>C5IAW9</accession>
<gene>
    <name evidence="11" type="primary">unc5b-b</name>
</gene>
<reference evidence="13" key="1">
    <citation type="journal article" date="2009" name="PLoS ONE">
        <title>Unc5B interacts with FLRT3 and Rnd1 to modulate cell adhesion in Xenopus embryos.</title>
        <authorList>
            <person name="Karaulanov E."/>
            <person name="Boettcher R.T."/>
            <person name="Stannek P."/>
            <person name="Wu W."/>
            <person name="Rau M."/>
            <person name="Ogata S."/>
            <person name="Cho K.W.Y."/>
            <person name="Niehrs C."/>
        </authorList>
    </citation>
    <scope>NUCLEOTIDE SEQUENCE [MRNA]</scope>
    <scope>INTERACTION WITH FLRT3 AND RND1</scope>
    <scope>SUBCELLULAR LOCATION</scope>
    <scope>FUNCTION</scope>
</reference>